<name>LPXK_FRATN</name>
<gene>
    <name evidence="1" type="primary">lpxK</name>
    <name type="ordered locus">FTN_1605</name>
</gene>
<feature type="chain" id="PRO_1000049895" description="Tetraacyldisaccharide 4'-kinase">
    <location>
        <begin position="1"/>
        <end position="322"/>
    </location>
</feature>
<feature type="binding site" evidence="1">
    <location>
        <begin position="54"/>
        <end position="61"/>
    </location>
    <ligand>
        <name>ATP</name>
        <dbReference type="ChEBI" id="CHEBI:30616"/>
    </ligand>
</feature>
<proteinExistence type="inferred from homology"/>
<protein>
    <recommendedName>
        <fullName evidence="1">Tetraacyldisaccharide 4'-kinase</fullName>
        <ecNumber evidence="1">2.7.1.130</ecNumber>
    </recommendedName>
    <alternativeName>
        <fullName evidence="1">Lipid A 4'-kinase</fullName>
    </alternativeName>
</protein>
<comment type="function">
    <text evidence="1">Transfers the gamma-phosphate of ATP to the 4'-position of a tetraacyldisaccharide 1-phosphate intermediate (termed DS-1-P) to form tetraacyldisaccharide 1,4'-bis-phosphate (lipid IVA).</text>
</comment>
<comment type="catalytic activity">
    <reaction evidence="1">
        <text>a lipid A disaccharide + ATP = a lipid IVA + ADP + H(+)</text>
        <dbReference type="Rhea" id="RHEA:67840"/>
        <dbReference type="ChEBI" id="CHEBI:15378"/>
        <dbReference type="ChEBI" id="CHEBI:30616"/>
        <dbReference type="ChEBI" id="CHEBI:176343"/>
        <dbReference type="ChEBI" id="CHEBI:176425"/>
        <dbReference type="ChEBI" id="CHEBI:456216"/>
        <dbReference type="EC" id="2.7.1.130"/>
    </reaction>
</comment>
<comment type="pathway">
    <text evidence="1">Glycolipid biosynthesis; lipid IV(A) biosynthesis; lipid IV(A) from (3R)-3-hydroxytetradecanoyl-[acyl-carrier-protein] and UDP-N-acetyl-alpha-D-glucosamine: step 6/6.</text>
</comment>
<comment type="similarity">
    <text evidence="1">Belongs to the LpxK family.</text>
</comment>
<sequence>MLDKIWYRSKPNLLSRVLQPISLVFIDIANKRKIKQQLKQYKSKIPIIVVGNISVGGTGKTPVVRMLAQQYLAQGKKPAIISRGYGAKADNYPFEVTSGTLATQCGDEPAMLFDALQAQVPIVIAPERVQAVKYIEKNFPDTDIIISDDGLQHYKLARDKEIVVVDAIRMFGNKLCLPAGPLREPIERLKEVDQIIVIGNCSDKDKELLKNYKNVTYAKVVATEFVNILTAKKVAKTEFNHQNVIAIAGIGNPTKFFKTLEESAINITAKKVFKDHHKFTQSDFEGIDSDITVVMTYKDAIKCKNFAKANWWYLDIALDINV</sequence>
<keyword id="KW-0067">ATP-binding</keyword>
<keyword id="KW-0418">Kinase</keyword>
<keyword id="KW-0441">Lipid A biosynthesis</keyword>
<keyword id="KW-0444">Lipid biosynthesis</keyword>
<keyword id="KW-0443">Lipid metabolism</keyword>
<keyword id="KW-0547">Nucleotide-binding</keyword>
<keyword id="KW-0808">Transferase</keyword>
<organism>
    <name type="scientific">Francisella tularensis subsp. novicida (strain U112)</name>
    <dbReference type="NCBI Taxonomy" id="401614"/>
    <lineage>
        <taxon>Bacteria</taxon>
        <taxon>Pseudomonadati</taxon>
        <taxon>Pseudomonadota</taxon>
        <taxon>Gammaproteobacteria</taxon>
        <taxon>Thiotrichales</taxon>
        <taxon>Francisellaceae</taxon>
        <taxon>Francisella</taxon>
    </lineage>
</organism>
<accession>A0Q8A0</accession>
<dbReference type="EC" id="2.7.1.130" evidence="1"/>
<dbReference type="EMBL" id="CP000439">
    <property type="protein sequence ID" value="ABK90465.1"/>
    <property type="molecule type" value="Genomic_DNA"/>
</dbReference>
<dbReference type="RefSeq" id="WP_003041158.1">
    <property type="nucleotide sequence ID" value="NC_008601.1"/>
</dbReference>
<dbReference type="SMR" id="A0Q8A0"/>
<dbReference type="KEGG" id="ftn:FTN_1605"/>
<dbReference type="KEGG" id="ftx:AW25_392"/>
<dbReference type="BioCyc" id="FTUL401614:G1G75-1657-MONOMER"/>
<dbReference type="UniPathway" id="UPA00359">
    <property type="reaction ID" value="UER00482"/>
</dbReference>
<dbReference type="Proteomes" id="UP000000762">
    <property type="component" value="Chromosome"/>
</dbReference>
<dbReference type="GO" id="GO:0005886">
    <property type="term" value="C:plasma membrane"/>
    <property type="evidence" value="ECO:0007669"/>
    <property type="project" value="TreeGrafter"/>
</dbReference>
<dbReference type="GO" id="GO:0005524">
    <property type="term" value="F:ATP binding"/>
    <property type="evidence" value="ECO:0007669"/>
    <property type="project" value="UniProtKB-UniRule"/>
</dbReference>
<dbReference type="GO" id="GO:0009029">
    <property type="term" value="F:tetraacyldisaccharide 4'-kinase activity"/>
    <property type="evidence" value="ECO:0007669"/>
    <property type="project" value="UniProtKB-UniRule"/>
</dbReference>
<dbReference type="GO" id="GO:0009245">
    <property type="term" value="P:lipid A biosynthetic process"/>
    <property type="evidence" value="ECO:0007669"/>
    <property type="project" value="UniProtKB-UniRule"/>
</dbReference>
<dbReference type="GO" id="GO:0009244">
    <property type="term" value="P:lipopolysaccharide core region biosynthetic process"/>
    <property type="evidence" value="ECO:0007669"/>
    <property type="project" value="TreeGrafter"/>
</dbReference>
<dbReference type="HAMAP" id="MF_00409">
    <property type="entry name" value="LpxK"/>
    <property type="match status" value="1"/>
</dbReference>
<dbReference type="InterPro" id="IPR003758">
    <property type="entry name" value="LpxK"/>
</dbReference>
<dbReference type="InterPro" id="IPR027417">
    <property type="entry name" value="P-loop_NTPase"/>
</dbReference>
<dbReference type="NCBIfam" id="TIGR00682">
    <property type="entry name" value="lpxK"/>
    <property type="match status" value="1"/>
</dbReference>
<dbReference type="PANTHER" id="PTHR42724">
    <property type="entry name" value="TETRAACYLDISACCHARIDE 4'-KINASE"/>
    <property type="match status" value="1"/>
</dbReference>
<dbReference type="PANTHER" id="PTHR42724:SF1">
    <property type="entry name" value="TETRAACYLDISACCHARIDE 4'-KINASE, MITOCHONDRIAL-RELATED"/>
    <property type="match status" value="1"/>
</dbReference>
<dbReference type="Pfam" id="PF02606">
    <property type="entry name" value="LpxK"/>
    <property type="match status" value="1"/>
</dbReference>
<dbReference type="SUPFAM" id="SSF52540">
    <property type="entry name" value="P-loop containing nucleoside triphosphate hydrolases"/>
    <property type="match status" value="1"/>
</dbReference>
<reference key="1">
    <citation type="journal article" date="2007" name="Genome Biol.">
        <title>Comparison of Francisella tularensis genomes reveals evolutionary events associated with the emergence of human pathogenic strains.</title>
        <authorList>
            <person name="Rohmer L."/>
            <person name="Fong C."/>
            <person name="Abmayr S."/>
            <person name="Wasnick M."/>
            <person name="Larson Freeman T.J."/>
            <person name="Radey M."/>
            <person name="Guina T."/>
            <person name="Svensson K."/>
            <person name="Hayden H.S."/>
            <person name="Jacobs M."/>
            <person name="Gallagher L.A."/>
            <person name="Manoil C."/>
            <person name="Ernst R.K."/>
            <person name="Drees B."/>
            <person name="Buckley D."/>
            <person name="Haugen E."/>
            <person name="Bovee D."/>
            <person name="Zhou Y."/>
            <person name="Chang J."/>
            <person name="Levy R."/>
            <person name="Lim R."/>
            <person name="Gillett W."/>
            <person name="Guenthener D."/>
            <person name="Kang A."/>
            <person name="Shaffer S.A."/>
            <person name="Taylor G."/>
            <person name="Chen J."/>
            <person name="Gallis B."/>
            <person name="D'Argenio D.A."/>
            <person name="Forsman M."/>
            <person name="Olson M.V."/>
            <person name="Goodlett D.R."/>
            <person name="Kaul R."/>
            <person name="Miller S.I."/>
            <person name="Brittnacher M.J."/>
        </authorList>
    </citation>
    <scope>NUCLEOTIDE SEQUENCE [LARGE SCALE GENOMIC DNA]</scope>
    <source>
        <strain>U112</strain>
    </source>
</reference>
<evidence type="ECO:0000255" key="1">
    <source>
        <dbReference type="HAMAP-Rule" id="MF_00409"/>
    </source>
</evidence>